<proteinExistence type="inferred from homology"/>
<keyword id="KW-0067">ATP-binding</keyword>
<keyword id="KW-0963">Cytoplasm</keyword>
<keyword id="KW-0418">Kinase</keyword>
<keyword id="KW-0460">Magnesium</keyword>
<keyword id="KW-0479">Metal-binding</keyword>
<keyword id="KW-0546">Nucleotide metabolism</keyword>
<keyword id="KW-0547">Nucleotide-binding</keyword>
<keyword id="KW-0597">Phosphoprotein</keyword>
<keyword id="KW-0808">Transferase</keyword>
<organism>
    <name type="scientific">Shewanella halifaxensis (strain HAW-EB4)</name>
    <dbReference type="NCBI Taxonomy" id="458817"/>
    <lineage>
        <taxon>Bacteria</taxon>
        <taxon>Pseudomonadati</taxon>
        <taxon>Pseudomonadota</taxon>
        <taxon>Gammaproteobacteria</taxon>
        <taxon>Alteromonadales</taxon>
        <taxon>Shewanellaceae</taxon>
        <taxon>Shewanella</taxon>
    </lineage>
</organism>
<reference key="1">
    <citation type="submission" date="2008-01" db="EMBL/GenBank/DDBJ databases">
        <title>Complete sequence of Shewanella halifaxensis HAW-EB4.</title>
        <authorList>
            <consortium name="US DOE Joint Genome Institute"/>
            <person name="Copeland A."/>
            <person name="Lucas S."/>
            <person name="Lapidus A."/>
            <person name="Glavina del Rio T."/>
            <person name="Dalin E."/>
            <person name="Tice H."/>
            <person name="Bruce D."/>
            <person name="Goodwin L."/>
            <person name="Pitluck S."/>
            <person name="Sims D."/>
            <person name="Brettin T."/>
            <person name="Detter J.C."/>
            <person name="Han C."/>
            <person name="Kuske C.R."/>
            <person name="Schmutz J."/>
            <person name="Larimer F."/>
            <person name="Land M."/>
            <person name="Hauser L."/>
            <person name="Kyrpides N."/>
            <person name="Kim E."/>
            <person name="Zhao J.-S."/>
            <person name="Richardson P."/>
        </authorList>
    </citation>
    <scope>NUCLEOTIDE SEQUENCE [LARGE SCALE GENOMIC DNA]</scope>
    <source>
        <strain>HAW-EB4</strain>
    </source>
</reference>
<name>NDK_SHEHH</name>
<gene>
    <name evidence="1" type="primary">ndk</name>
    <name type="ordered locus">Shal_1580</name>
</gene>
<evidence type="ECO:0000255" key="1">
    <source>
        <dbReference type="HAMAP-Rule" id="MF_00451"/>
    </source>
</evidence>
<dbReference type="EC" id="2.7.4.6" evidence="1"/>
<dbReference type="EMBL" id="CP000931">
    <property type="protein sequence ID" value="ABZ76146.1"/>
    <property type="molecule type" value="Genomic_DNA"/>
</dbReference>
<dbReference type="RefSeq" id="WP_012276684.1">
    <property type="nucleotide sequence ID" value="NC_010334.1"/>
</dbReference>
<dbReference type="SMR" id="B0TNY9"/>
<dbReference type="STRING" id="458817.Shal_1580"/>
<dbReference type="KEGG" id="shl:Shal_1580"/>
<dbReference type="eggNOG" id="COG0105">
    <property type="taxonomic scope" value="Bacteria"/>
</dbReference>
<dbReference type="HOGENOM" id="CLU_060216_8_1_6"/>
<dbReference type="OrthoDB" id="9801161at2"/>
<dbReference type="Proteomes" id="UP000001317">
    <property type="component" value="Chromosome"/>
</dbReference>
<dbReference type="GO" id="GO:0005737">
    <property type="term" value="C:cytoplasm"/>
    <property type="evidence" value="ECO:0007669"/>
    <property type="project" value="UniProtKB-SubCell"/>
</dbReference>
<dbReference type="GO" id="GO:0005524">
    <property type="term" value="F:ATP binding"/>
    <property type="evidence" value="ECO:0007669"/>
    <property type="project" value="UniProtKB-UniRule"/>
</dbReference>
<dbReference type="GO" id="GO:0046872">
    <property type="term" value="F:metal ion binding"/>
    <property type="evidence" value="ECO:0007669"/>
    <property type="project" value="UniProtKB-KW"/>
</dbReference>
<dbReference type="GO" id="GO:0004550">
    <property type="term" value="F:nucleoside diphosphate kinase activity"/>
    <property type="evidence" value="ECO:0007669"/>
    <property type="project" value="UniProtKB-UniRule"/>
</dbReference>
<dbReference type="GO" id="GO:0006241">
    <property type="term" value="P:CTP biosynthetic process"/>
    <property type="evidence" value="ECO:0007669"/>
    <property type="project" value="UniProtKB-UniRule"/>
</dbReference>
<dbReference type="GO" id="GO:0006183">
    <property type="term" value="P:GTP biosynthetic process"/>
    <property type="evidence" value="ECO:0007669"/>
    <property type="project" value="UniProtKB-UniRule"/>
</dbReference>
<dbReference type="GO" id="GO:0006228">
    <property type="term" value="P:UTP biosynthetic process"/>
    <property type="evidence" value="ECO:0007669"/>
    <property type="project" value="UniProtKB-UniRule"/>
</dbReference>
<dbReference type="CDD" id="cd04413">
    <property type="entry name" value="NDPk_I"/>
    <property type="match status" value="1"/>
</dbReference>
<dbReference type="FunFam" id="3.30.70.141:FF:000001">
    <property type="entry name" value="Nucleoside diphosphate kinase"/>
    <property type="match status" value="1"/>
</dbReference>
<dbReference type="Gene3D" id="3.30.70.141">
    <property type="entry name" value="Nucleoside diphosphate kinase-like domain"/>
    <property type="match status" value="1"/>
</dbReference>
<dbReference type="HAMAP" id="MF_00451">
    <property type="entry name" value="NDP_kinase"/>
    <property type="match status" value="1"/>
</dbReference>
<dbReference type="InterPro" id="IPR034907">
    <property type="entry name" value="NDK-like_dom"/>
</dbReference>
<dbReference type="InterPro" id="IPR036850">
    <property type="entry name" value="NDK-like_dom_sf"/>
</dbReference>
<dbReference type="InterPro" id="IPR001564">
    <property type="entry name" value="Nucleoside_diP_kinase"/>
</dbReference>
<dbReference type="InterPro" id="IPR023005">
    <property type="entry name" value="Nucleoside_diP_kinase_AS"/>
</dbReference>
<dbReference type="NCBIfam" id="NF001908">
    <property type="entry name" value="PRK00668.1"/>
    <property type="match status" value="1"/>
</dbReference>
<dbReference type="PANTHER" id="PTHR46161">
    <property type="entry name" value="NUCLEOSIDE DIPHOSPHATE KINASE"/>
    <property type="match status" value="1"/>
</dbReference>
<dbReference type="PANTHER" id="PTHR46161:SF3">
    <property type="entry name" value="NUCLEOSIDE DIPHOSPHATE KINASE DDB_G0292928-RELATED"/>
    <property type="match status" value="1"/>
</dbReference>
<dbReference type="Pfam" id="PF00334">
    <property type="entry name" value="NDK"/>
    <property type="match status" value="1"/>
</dbReference>
<dbReference type="PRINTS" id="PR01243">
    <property type="entry name" value="NUCDPKINASE"/>
</dbReference>
<dbReference type="SMART" id="SM00562">
    <property type="entry name" value="NDK"/>
    <property type="match status" value="1"/>
</dbReference>
<dbReference type="SUPFAM" id="SSF54919">
    <property type="entry name" value="Nucleoside diphosphate kinase, NDK"/>
    <property type="match status" value="1"/>
</dbReference>
<dbReference type="PROSITE" id="PS00469">
    <property type="entry name" value="NDPK"/>
    <property type="match status" value="1"/>
</dbReference>
<dbReference type="PROSITE" id="PS51374">
    <property type="entry name" value="NDPK_LIKE"/>
    <property type="match status" value="1"/>
</dbReference>
<comment type="function">
    <text evidence="1">Major role in the synthesis of nucleoside triphosphates other than ATP. The ATP gamma phosphate is transferred to the NDP beta phosphate via a ping-pong mechanism, using a phosphorylated active-site intermediate.</text>
</comment>
<comment type="catalytic activity">
    <reaction evidence="1">
        <text>a 2'-deoxyribonucleoside 5'-diphosphate + ATP = a 2'-deoxyribonucleoside 5'-triphosphate + ADP</text>
        <dbReference type="Rhea" id="RHEA:44640"/>
        <dbReference type="ChEBI" id="CHEBI:30616"/>
        <dbReference type="ChEBI" id="CHEBI:61560"/>
        <dbReference type="ChEBI" id="CHEBI:73316"/>
        <dbReference type="ChEBI" id="CHEBI:456216"/>
        <dbReference type="EC" id="2.7.4.6"/>
    </reaction>
</comment>
<comment type="catalytic activity">
    <reaction evidence="1">
        <text>a ribonucleoside 5'-diphosphate + ATP = a ribonucleoside 5'-triphosphate + ADP</text>
        <dbReference type="Rhea" id="RHEA:18113"/>
        <dbReference type="ChEBI" id="CHEBI:30616"/>
        <dbReference type="ChEBI" id="CHEBI:57930"/>
        <dbReference type="ChEBI" id="CHEBI:61557"/>
        <dbReference type="ChEBI" id="CHEBI:456216"/>
        <dbReference type="EC" id="2.7.4.6"/>
    </reaction>
</comment>
<comment type="cofactor">
    <cofactor evidence="1">
        <name>Mg(2+)</name>
        <dbReference type="ChEBI" id="CHEBI:18420"/>
    </cofactor>
</comment>
<comment type="subunit">
    <text evidence="1">Homotetramer.</text>
</comment>
<comment type="subcellular location">
    <subcellularLocation>
        <location evidence="1">Cytoplasm</location>
    </subcellularLocation>
</comment>
<comment type="similarity">
    <text evidence="1">Belongs to the NDK family.</text>
</comment>
<protein>
    <recommendedName>
        <fullName evidence="1">Nucleoside diphosphate kinase</fullName>
        <shortName evidence="1">NDK</shortName>
        <shortName evidence="1">NDP kinase</shortName>
        <ecNumber evidence="1">2.7.4.6</ecNumber>
    </recommendedName>
    <alternativeName>
        <fullName evidence="1">Nucleoside-2-P kinase</fullName>
    </alternativeName>
</protein>
<sequence>MAIERTFSIIKPDAVAKNHIGAIYNRFETAGLKIIASKMVHLSQEQAEGFYAEHSERPFFGALVAFMTSGPIMVQTLEGENAVLAHREILGATNPAEAAEGTIRADFAESIDENAAHGSDSVASAEREIAYFFSTEELCPRTR</sequence>
<accession>B0TNY9</accession>
<feature type="chain" id="PRO_1000080978" description="Nucleoside diphosphate kinase">
    <location>
        <begin position="1"/>
        <end position="143"/>
    </location>
</feature>
<feature type="active site" description="Pros-phosphohistidine intermediate" evidence="1">
    <location>
        <position position="117"/>
    </location>
</feature>
<feature type="binding site" evidence="1">
    <location>
        <position position="11"/>
    </location>
    <ligand>
        <name>ATP</name>
        <dbReference type="ChEBI" id="CHEBI:30616"/>
    </ligand>
</feature>
<feature type="binding site" evidence="1">
    <location>
        <position position="59"/>
    </location>
    <ligand>
        <name>ATP</name>
        <dbReference type="ChEBI" id="CHEBI:30616"/>
    </ligand>
</feature>
<feature type="binding site" evidence="1">
    <location>
        <position position="87"/>
    </location>
    <ligand>
        <name>ATP</name>
        <dbReference type="ChEBI" id="CHEBI:30616"/>
    </ligand>
</feature>
<feature type="binding site" evidence="1">
    <location>
        <position position="93"/>
    </location>
    <ligand>
        <name>ATP</name>
        <dbReference type="ChEBI" id="CHEBI:30616"/>
    </ligand>
</feature>
<feature type="binding site" evidence="1">
    <location>
        <position position="104"/>
    </location>
    <ligand>
        <name>ATP</name>
        <dbReference type="ChEBI" id="CHEBI:30616"/>
    </ligand>
</feature>
<feature type="binding site" evidence="1">
    <location>
        <position position="114"/>
    </location>
    <ligand>
        <name>ATP</name>
        <dbReference type="ChEBI" id="CHEBI:30616"/>
    </ligand>
</feature>